<evidence type="ECO:0000255" key="1"/>
<evidence type="ECO:0000269" key="2">
    <source>
    </source>
</evidence>
<evidence type="ECO:0000303" key="3">
    <source>
    </source>
</evidence>
<evidence type="ECO:0000305" key="4"/>
<evidence type="ECO:0000305" key="5">
    <source>
    </source>
</evidence>
<sequence>GIFGKILGAGKKVLCGLSGLC</sequence>
<organism>
    <name type="scientific">Odorrana jingdongensis</name>
    <name type="common">Jingdong frog</name>
    <name type="synonym">Rana jingdongensis</name>
    <dbReference type="NCBI Taxonomy" id="431936"/>
    <lineage>
        <taxon>Eukaryota</taxon>
        <taxon>Metazoa</taxon>
        <taxon>Chordata</taxon>
        <taxon>Craniata</taxon>
        <taxon>Vertebrata</taxon>
        <taxon>Euteleostomi</taxon>
        <taxon>Amphibia</taxon>
        <taxon>Batrachia</taxon>
        <taxon>Anura</taxon>
        <taxon>Neobatrachia</taxon>
        <taxon>Ranoidea</taxon>
        <taxon>Ranidae</taxon>
        <taxon>Odorrana</taxon>
    </lineage>
</organism>
<reference evidence="4" key="1">
    <citation type="journal article" date="2012" name="J. Proteomics">
        <title>Antimicrobial peptides from the skin of the Asian frog, Odorrana jingdongensis: De novo sequencing and analysis of tandem mass spectrometry data.</title>
        <authorList>
            <person name="Liu J."/>
            <person name="Jiang J."/>
            <person name="Wu Z."/>
            <person name="Xie F."/>
        </authorList>
    </citation>
    <scope>PROTEIN SEQUENCE</scope>
    <scope>FUNCTION</scope>
    <scope>SUBCELLULAR LOCATION</scope>
    <scope>MASS SPECTROMETRY</scope>
    <source>
        <tissue evidence="2">Skin secretion</tissue>
    </source>
</reference>
<keyword id="KW-0878">Amphibian defense peptide</keyword>
<keyword id="KW-0044">Antibiotic</keyword>
<keyword id="KW-0929">Antimicrobial</keyword>
<keyword id="KW-0204">Cytolysis</keyword>
<keyword id="KW-0903">Direct protein sequencing</keyword>
<keyword id="KW-1015">Disulfide bond</keyword>
<keyword id="KW-0295">Fungicide</keyword>
<keyword id="KW-0354">Hemolysis</keyword>
<keyword id="KW-0964">Secreted</keyword>
<proteinExistence type="evidence at protein level"/>
<dbReference type="GO" id="GO:0005576">
    <property type="term" value="C:extracellular region"/>
    <property type="evidence" value="ECO:0007669"/>
    <property type="project" value="UniProtKB-SubCell"/>
</dbReference>
<dbReference type="GO" id="GO:0050832">
    <property type="term" value="P:defense response to fungus"/>
    <property type="evidence" value="ECO:0000314"/>
    <property type="project" value="UniProtKB"/>
</dbReference>
<dbReference type="GO" id="GO:0050829">
    <property type="term" value="P:defense response to Gram-negative bacterium"/>
    <property type="evidence" value="ECO:0000314"/>
    <property type="project" value="UniProtKB"/>
</dbReference>
<dbReference type="GO" id="GO:0050830">
    <property type="term" value="P:defense response to Gram-positive bacterium"/>
    <property type="evidence" value="ECO:0000314"/>
    <property type="project" value="UniProtKB"/>
</dbReference>
<dbReference type="GO" id="GO:0044179">
    <property type="term" value="P:hemolysis in another organism"/>
    <property type="evidence" value="ECO:0000314"/>
    <property type="project" value="UniProtKB"/>
</dbReference>
<dbReference type="InterPro" id="IPR032749">
    <property type="entry name" value="Nigrocin"/>
</dbReference>
<dbReference type="Pfam" id="PF16047">
    <property type="entry name" value="Antimicrobial22"/>
    <property type="match status" value="1"/>
</dbReference>
<accession>B3A0M6</accession>
<comment type="function">
    <text evidence="2">Has antibacterial activity against E.coli ATCC 25992 (MIC=16 uM), E.coli CIB 84492 (MIC=16 uM), S.aureus ATCC 25923 (MIC=16 uM) and S.aureus CIB 85462 (MIC=8 uM). Has antifungal activity against C.albicans (MIC=63 uM). Has hemolytic activity against rabbit erythrocytes.</text>
</comment>
<comment type="subcellular location">
    <subcellularLocation>
        <location evidence="5">Secreted</location>
    </subcellularLocation>
</comment>
<comment type="tissue specificity">
    <text evidence="5">Expressed by the skin glands.</text>
</comment>
<comment type="mass spectrometry"/>
<comment type="similarity">
    <text evidence="1">Belongs to the frog skin active peptide (FSAP) family. Brevinin subfamily.</text>
</comment>
<name>NIG2A_ODOJI</name>
<protein>
    <recommendedName>
        <fullName evidence="3">Nigrocin-2JDa</fullName>
    </recommendedName>
</protein>
<feature type="peptide" id="PRO_0000420137" description="Nigrocin-2JDa" evidence="2">
    <location>
        <begin position="1"/>
        <end position="21"/>
    </location>
</feature>
<feature type="disulfide bond" evidence="2">
    <location>
        <begin position="15"/>
        <end position="21"/>
    </location>
</feature>
<feature type="unsure residue" description="L or I" evidence="2">
    <location>
        <position position="14"/>
    </location>
</feature>
<feature type="unsure residue" description="L or I" evidence="2">
    <location>
        <position position="17"/>
    </location>
</feature>
<feature type="unsure residue" description="L or I" evidence="2">
    <location>
        <position position="20"/>
    </location>
</feature>